<sequence length="121" mass="13274">MTQSTEDTLLRLAAVIDSRKGGDPDQSYVSRLFHKGDDAVLKKIGEEATEVVLAAKDVRQGGAPSALVGEVADLWFHCLVMLSHFDLSPADVIAELERREGLSGIEEKALRKRREREENGG</sequence>
<reference key="1">
    <citation type="submission" date="2006-05" db="EMBL/GenBank/DDBJ databases">
        <title>Complete sequence of chromosome 1 of Burkholderia cenocepacia AU 1054.</title>
        <authorList>
            <consortium name="US DOE Joint Genome Institute"/>
            <person name="Copeland A."/>
            <person name="Lucas S."/>
            <person name="Lapidus A."/>
            <person name="Barry K."/>
            <person name="Detter J.C."/>
            <person name="Glavina del Rio T."/>
            <person name="Hammon N."/>
            <person name="Israni S."/>
            <person name="Dalin E."/>
            <person name="Tice H."/>
            <person name="Pitluck S."/>
            <person name="Chain P."/>
            <person name="Malfatti S."/>
            <person name="Shin M."/>
            <person name="Vergez L."/>
            <person name="Schmutz J."/>
            <person name="Larimer F."/>
            <person name="Land M."/>
            <person name="Hauser L."/>
            <person name="Kyrpides N."/>
            <person name="Lykidis A."/>
            <person name="LiPuma J.J."/>
            <person name="Konstantinidis K."/>
            <person name="Tiedje J.M."/>
            <person name="Richardson P."/>
        </authorList>
    </citation>
    <scope>NUCLEOTIDE SEQUENCE [LARGE SCALE GENOMIC DNA]</scope>
    <source>
        <strain>AU 1054</strain>
    </source>
</reference>
<name>HIS2_BURO1</name>
<keyword id="KW-0028">Amino-acid biosynthesis</keyword>
<keyword id="KW-0067">ATP-binding</keyword>
<keyword id="KW-0963">Cytoplasm</keyword>
<keyword id="KW-0368">Histidine biosynthesis</keyword>
<keyword id="KW-0378">Hydrolase</keyword>
<keyword id="KW-0547">Nucleotide-binding</keyword>
<comment type="catalytic activity">
    <reaction evidence="1">
        <text>1-(5-phospho-beta-D-ribosyl)-ATP + H2O = 1-(5-phospho-beta-D-ribosyl)-5'-AMP + diphosphate + H(+)</text>
        <dbReference type="Rhea" id="RHEA:22828"/>
        <dbReference type="ChEBI" id="CHEBI:15377"/>
        <dbReference type="ChEBI" id="CHEBI:15378"/>
        <dbReference type="ChEBI" id="CHEBI:33019"/>
        <dbReference type="ChEBI" id="CHEBI:59457"/>
        <dbReference type="ChEBI" id="CHEBI:73183"/>
        <dbReference type="EC" id="3.6.1.31"/>
    </reaction>
</comment>
<comment type="pathway">
    <text evidence="1">Amino-acid biosynthesis; L-histidine biosynthesis; L-histidine from 5-phospho-alpha-D-ribose 1-diphosphate: step 2/9.</text>
</comment>
<comment type="subcellular location">
    <subcellularLocation>
        <location evidence="1">Cytoplasm</location>
    </subcellularLocation>
</comment>
<comment type="similarity">
    <text evidence="1">Belongs to the PRA-PH family.</text>
</comment>
<proteinExistence type="inferred from homology"/>
<gene>
    <name evidence="1" type="primary">hisE</name>
    <name type="ordered locus">Bcen_2674</name>
</gene>
<feature type="chain" id="PRO_1000063324" description="Phosphoribosyl-ATP pyrophosphatase">
    <location>
        <begin position="1"/>
        <end position="121"/>
    </location>
</feature>
<organism>
    <name type="scientific">Burkholderia orbicola (strain AU 1054)</name>
    <dbReference type="NCBI Taxonomy" id="331271"/>
    <lineage>
        <taxon>Bacteria</taxon>
        <taxon>Pseudomonadati</taxon>
        <taxon>Pseudomonadota</taxon>
        <taxon>Betaproteobacteria</taxon>
        <taxon>Burkholderiales</taxon>
        <taxon>Burkholderiaceae</taxon>
        <taxon>Burkholderia</taxon>
        <taxon>Burkholderia cepacia complex</taxon>
        <taxon>Burkholderia orbicola</taxon>
    </lineage>
</organism>
<dbReference type="EC" id="3.6.1.31" evidence="1"/>
<dbReference type="EMBL" id="CP000378">
    <property type="protein sequence ID" value="ABF77572.1"/>
    <property type="molecule type" value="Genomic_DNA"/>
</dbReference>
<dbReference type="SMR" id="Q1BS33"/>
<dbReference type="HOGENOM" id="CLU_123337_1_2_4"/>
<dbReference type="UniPathway" id="UPA00031">
    <property type="reaction ID" value="UER00007"/>
</dbReference>
<dbReference type="GO" id="GO:0005737">
    <property type="term" value="C:cytoplasm"/>
    <property type="evidence" value="ECO:0007669"/>
    <property type="project" value="UniProtKB-SubCell"/>
</dbReference>
<dbReference type="GO" id="GO:0005524">
    <property type="term" value="F:ATP binding"/>
    <property type="evidence" value="ECO:0007669"/>
    <property type="project" value="UniProtKB-KW"/>
</dbReference>
<dbReference type="GO" id="GO:0004636">
    <property type="term" value="F:phosphoribosyl-ATP diphosphatase activity"/>
    <property type="evidence" value="ECO:0007669"/>
    <property type="project" value="UniProtKB-UniRule"/>
</dbReference>
<dbReference type="GO" id="GO:0000105">
    <property type="term" value="P:L-histidine biosynthetic process"/>
    <property type="evidence" value="ECO:0007669"/>
    <property type="project" value="UniProtKB-UniRule"/>
</dbReference>
<dbReference type="CDD" id="cd11534">
    <property type="entry name" value="NTP-PPase_HisIE_like"/>
    <property type="match status" value="1"/>
</dbReference>
<dbReference type="Gene3D" id="1.10.287.1080">
    <property type="entry name" value="MazG-like"/>
    <property type="match status" value="1"/>
</dbReference>
<dbReference type="HAMAP" id="MF_01020">
    <property type="entry name" value="HisE"/>
    <property type="match status" value="1"/>
</dbReference>
<dbReference type="InterPro" id="IPR008179">
    <property type="entry name" value="HisE"/>
</dbReference>
<dbReference type="InterPro" id="IPR021130">
    <property type="entry name" value="PRib-ATP_PPHydrolase-like"/>
</dbReference>
<dbReference type="NCBIfam" id="TIGR03188">
    <property type="entry name" value="histidine_hisI"/>
    <property type="match status" value="1"/>
</dbReference>
<dbReference type="NCBIfam" id="NF001611">
    <property type="entry name" value="PRK00400.1-3"/>
    <property type="match status" value="1"/>
</dbReference>
<dbReference type="PANTHER" id="PTHR42945">
    <property type="entry name" value="HISTIDINE BIOSYNTHESIS BIFUNCTIONAL PROTEIN"/>
    <property type="match status" value="1"/>
</dbReference>
<dbReference type="PANTHER" id="PTHR42945:SF9">
    <property type="entry name" value="HISTIDINE BIOSYNTHESIS BIFUNCTIONAL PROTEIN HISIE"/>
    <property type="match status" value="1"/>
</dbReference>
<dbReference type="Pfam" id="PF01503">
    <property type="entry name" value="PRA-PH"/>
    <property type="match status" value="1"/>
</dbReference>
<dbReference type="SUPFAM" id="SSF101386">
    <property type="entry name" value="all-alpha NTP pyrophosphatases"/>
    <property type="match status" value="1"/>
</dbReference>
<evidence type="ECO:0000255" key="1">
    <source>
        <dbReference type="HAMAP-Rule" id="MF_01020"/>
    </source>
</evidence>
<accession>Q1BS33</accession>
<protein>
    <recommendedName>
        <fullName evidence="1">Phosphoribosyl-ATP pyrophosphatase</fullName>
        <shortName evidence="1">PRA-PH</shortName>
        <ecNumber evidence="1">3.6.1.31</ecNumber>
    </recommendedName>
</protein>